<protein>
    <recommendedName>
        <fullName evidence="1">Dihydroxy-acid dehydratase</fullName>
        <shortName evidence="1">DAD</shortName>
        <ecNumber evidence="1">4.2.1.9</ecNumber>
    </recommendedName>
</protein>
<evidence type="ECO:0000255" key="1">
    <source>
        <dbReference type="HAMAP-Rule" id="MF_00012"/>
    </source>
</evidence>
<reference key="1">
    <citation type="journal article" date="2008" name="Proc. Natl. Acad. Sci. U.S.A.">
        <title>Nitrogen fixation island and rhizosphere competence traits in the genome of root-associated Pseudomonas stutzeri A1501.</title>
        <authorList>
            <person name="Yan Y."/>
            <person name="Yang J."/>
            <person name="Dou Y."/>
            <person name="Chen M."/>
            <person name="Ping S."/>
            <person name="Peng J."/>
            <person name="Lu W."/>
            <person name="Zhang W."/>
            <person name="Yao Z."/>
            <person name="Li H."/>
            <person name="Liu W."/>
            <person name="He S."/>
            <person name="Geng L."/>
            <person name="Zhang X."/>
            <person name="Yang F."/>
            <person name="Yu H."/>
            <person name="Zhan Y."/>
            <person name="Li D."/>
            <person name="Lin Z."/>
            <person name="Wang Y."/>
            <person name="Elmerich C."/>
            <person name="Lin M."/>
            <person name="Jin Q."/>
        </authorList>
    </citation>
    <scope>NUCLEOTIDE SEQUENCE [LARGE SCALE GENOMIC DNA]</scope>
    <source>
        <strain>A1501</strain>
    </source>
</reference>
<accession>A4VRN4</accession>
<name>ILVD_STUS1</name>
<keyword id="KW-0001">2Fe-2S</keyword>
<keyword id="KW-0028">Amino-acid biosynthesis</keyword>
<keyword id="KW-0100">Branched-chain amino acid biosynthesis</keyword>
<keyword id="KW-0408">Iron</keyword>
<keyword id="KW-0411">Iron-sulfur</keyword>
<keyword id="KW-0456">Lyase</keyword>
<keyword id="KW-0460">Magnesium</keyword>
<keyword id="KW-0479">Metal-binding</keyword>
<keyword id="KW-1185">Reference proteome</keyword>
<comment type="function">
    <text evidence="1">Functions in the biosynthesis of branched-chain amino acids. Catalyzes the dehydration of (2R,3R)-2,3-dihydroxy-3-methylpentanoate (2,3-dihydroxy-3-methylvalerate) into 2-oxo-3-methylpentanoate (2-oxo-3-methylvalerate) and of (2R)-2,3-dihydroxy-3-methylbutanoate (2,3-dihydroxyisovalerate) into 2-oxo-3-methylbutanoate (2-oxoisovalerate), the penultimate precursor to L-isoleucine and L-valine, respectively.</text>
</comment>
<comment type="catalytic activity">
    <reaction evidence="1">
        <text>(2R)-2,3-dihydroxy-3-methylbutanoate = 3-methyl-2-oxobutanoate + H2O</text>
        <dbReference type="Rhea" id="RHEA:24809"/>
        <dbReference type="ChEBI" id="CHEBI:11851"/>
        <dbReference type="ChEBI" id="CHEBI:15377"/>
        <dbReference type="ChEBI" id="CHEBI:49072"/>
        <dbReference type="EC" id="4.2.1.9"/>
    </reaction>
    <physiologicalReaction direction="left-to-right" evidence="1">
        <dbReference type="Rhea" id="RHEA:24810"/>
    </physiologicalReaction>
</comment>
<comment type="catalytic activity">
    <reaction evidence="1">
        <text>(2R,3R)-2,3-dihydroxy-3-methylpentanoate = (S)-3-methyl-2-oxopentanoate + H2O</text>
        <dbReference type="Rhea" id="RHEA:27694"/>
        <dbReference type="ChEBI" id="CHEBI:15377"/>
        <dbReference type="ChEBI" id="CHEBI:35146"/>
        <dbReference type="ChEBI" id="CHEBI:49258"/>
        <dbReference type="EC" id="4.2.1.9"/>
    </reaction>
    <physiologicalReaction direction="left-to-right" evidence="1">
        <dbReference type="Rhea" id="RHEA:27695"/>
    </physiologicalReaction>
</comment>
<comment type="cofactor">
    <cofactor evidence="1">
        <name>[2Fe-2S] cluster</name>
        <dbReference type="ChEBI" id="CHEBI:190135"/>
    </cofactor>
    <text evidence="1">Binds 1 [2Fe-2S] cluster per subunit. This cluster acts as a Lewis acid cofactor.</text>
</comment>
<comment type="cofactor">
    <cofactor evidence="1">
        <name>Mg(2+)</name>
        <dbReference type="ChEBI" id="CHEBI:18420"/>
    </cofactor>
</comment>
<comment type="pathway">
    <text evidence="1">Amino-acid biosynthesis; L-isoleucine biosynthesis; L-isoleucine from 2-oxobutanoate: step 3/4.</text>
</comment>
<comment type="pathway">
    <text evidence="1">Amino-acid biosynthesis; L-valine biosynthesis; L-valine from pyruvate: step 3/4.</text>
</comment>
<comment type="subunit">
    <text evidence="1">Homodimer.</text>
</comment>
<comment type="similarity">
    <text evidence="1">Belongs to the IlvD/Edd family.</text>
</comment>
<proteinExistence type="inferred from homology"/>
<dbReference type="EC" id="4.2.1.9" evidence="1"/>
<dbReference type="EMBL" id="CP000304">
    <property type="protein sequence ID" value="ABP81635.1"/>
    <property type="molecule type" value="Genomic_DNA"/>
</dbReference>
<dbReference type="RefSeq" id="WP_011915016.1">
    <property type="nucleotide sequence ID" value="NC_009434.1"/>
</dbReference>
<dbReference type="SMR" id="A4VRN4"/>
<dbReference type="KEGG" id="psa:PST_4012"/>
<dbReference type="eggNOG" id="COG0129">
    <property type="taxonomic scope" value="Bacteria"/>
</dbReference>
<dbReference type="HOGENOM" id="CLU_014271_4_2_6"/>
<dbReference type="UniPathway" id="UPA00047">
    <property type="reaction ID" value="UER00057"/>
</dbReference>
<dbReference type="UniPathway" id="UPA00049">
    <property type="reaction ID" value="UER00061"/>
</dbReference>
<dbReference type="Proteomes" id="UP000000233">
    <property type="component" value="Chromosome"/>
</dbReference>
<dbReference type="GO" id="GO:0005829">
    <property type="term" value="C:cytosol"/>
    <property type="evidence" value="ECO:0007669"/>
    <property type="project" value="TreeGrafter"/>
</dbReference>
<dbReference type="GO" id="GO:0051537">
    <property type="term" value="F:2 iron, 2 sulfur cluster binding"/>
    <property type="evidence" value="ECO:0007669"/>
    <property type="project" value="UniProtKB-UniRule"/>
</dbReference>
<dbReference type="GO" id="GO:0004160">
    <property type="term" value="F:dihydroxy-acid dehydratase activity"/>
    <property type="evidence" value="ECO:0007669"/>
    <property type="project" value="UniProtKB-UniRule"/>
</dbReference>
<dbReference type="GO" id="GO:0000287">
    <property type="term" value="F:magnesium ion binding"/>
    <property type="evidence" value="ECO:0007669"/>
    <property type="project" value="UniProtKB-UniRule"/>
</dbReference>
<dbReference type="GO" id="GO:0009097">
    <property type="term" value="P:isoleucine biosynthetic process"/>
    <property type="evidence" value="ECO:0007669"/>
    <property type="project" value="UniProtKB-UniRule"/>
</dbReference>
<dbReference type="GO" id="GO:0009099">
    <property type="term" value="P:L-valine biosynthetic process"/>
    <property type="evidence" value="ECO:0007669"/>
    <property type="project" value="UniProtKB-UniRule"/>
</dbReference>
<dbReference type="FunFam" id="3.50.30.80:FF:000001">
    <property type="entry name" value="Dihydroxy-acid dehydratase"/>
    <property type="match status" value="1"/>
</dbReference>
<dbReference type="Gene3D" id="3.50.30.80">
    <property type="entry name" value="IlvD/EDD C-terminal domain-like"/>
    <property type="match status" value="1"/>
</dbReference>
<dbReference type="HAMAP" id="MF_00012">
    <property type="entry name" value="IlvD"/>
    <property type="match status" value="1"/>
</dbReference>
<dbReference type="InterPro" id="IPR042096">
    <property type="entry name" value="Dihydro-acid_dehy_C"/>
</dbReference>
<dbReference type="InterPro" id="IPR004404">
    <property type="entry name" value="DihydroxyA_deHydtase"/>
</dbReference>
<dbReference type="InterPro" id="IPR020558">
    <property type="entry name" value="DiOHA_6PGluconate_deHydtase_CS"/>
</dbReference>
<dbReference type="InterPro" id="IPR056740">
    <property type="entry name" value="ILV_EDD_C"/>
</dbReference>
<dbReference type="InterPro" id="IPR000581">
    <property type="entry name" value="ILV_EDD_N"/>
</dbReference>
<dbReference type="InterPro" id="IPR037237">
    <property type="entry name" value="IlvD/EDD_N"/>
</dbReference>
<dbReference type="NCBIfam" id="TIGR00110">
    <property type="entry name" value="ilvD"/>
    <property type="match status" value="1"/>
</dbReference>
<dbReference type="NCBIfam" id="NF009103">
    <property type="entry name" value="PRK12448.1"/>
    <property type="match status" value="1"/>
</dbReference>
<dbReference type="PANTHER" id="PTHR43661">
    <property type="entry name" value="D-XYLONATE DEHYDRATASE"/>
    <property type="match status" value="1"/>
</dbReference>
<dbReference type="PANTHER" id="PTHR43661:SF3">
    <property type="entry name" value="D-XYLONATE DEHYDRATASE YAGF-RELATED"/>
    <property type="match status" value="1"/>
</dbReference>
<dbReference type="Pfam" id="PF24877">
    <property type="entry name" value="ILV_EDD_C"/>
    <property type="match status" value="1"/>
</dbReference>
<dbReference type="Pfam" id="PF00920">
    <property type="entry name" value="ILVD_EDD_N"/>
    <property type="match status" value="1"/>
</dbReference>
<dbReference type="SUPFAM" id="SSF143975">
    <property type="entry name" value="IlvD/EDD N-terminal domain-like"/>
    <property type="match status" value="1"/>
</dbReference>
<dbReference type="SUPFAM" id="SSF52016">
    <property type="entry name" value="LeuD/IlvD-like"/>
    <property type="match status" value="1"/>
</dbReference>
<dbReference type="PROSITE" id="PS00886">
    <property type="entry name" value="ILVD_EDD_1"/>
    <property type="match status" value="1"/>
</dbReference>
<dbReference type="PROSITE" id="PS00887">
    <property type="entry name" value="ILVD_EDD_2"/>
    <property type="match status" value="1"/>
</dbReference>
<feature type="chain" id="PRO_1000001038" description="Dihydroxy-acid dehydratase">
    <location>
        <begin position="1"/>
        <end position="612"/>
    </location>
</feature>
<feature type="active site" description="Proton acceptor" evidence="1">
    <location>
        <position position="515"/>
    </location>
</feature>
<feature type="binding site" evidence="1">
    <location>
        <position position="81"/>
    </location>
    <ligand>
        <name>Mg(2+)</name>
        <dbReference type="ChEBI" id="CHEBI:18420"/>
    </ligand>
</feature>
<feature type="binding site" evidence="1">
    <location>
        <position position="122"/>
    </location>
    <ligand>
        <name>[2Fe-2S] cluster</name>
        <dbReference type="ChEBI" id="CHEBI:190135"/>
    </ligand>
</feature>
<feature type="binding site" evidence="1">
    <location>
        <position position="123"/>
    </location>
    <ligand>
        <name>Mg(2+)</name>
        <dbReference type="ChEBI" id="CHEBI:18420"/>
    </ligand>
</feature>
<feature type="binding site" description="via carbamate group" evidence="1">
    <location>
        <position position="124"/>
    </location>
    <ligand>
        <name>Mg(2+)</name>
        <dbReference type="ChEBI" id="CHEBI:18420"/>
    </ligand>
</feature>
<feature type="binding site" evidence="1">
    <location>
        <position position="193"/>
    </location>
    <ligand>
        <name>[2Fe-2S] cluster</name>
        <dbReference type="ChEBI" id="CHEBI:190135"/>
    </ligand>
</feature>
<feature type="binding site" evidence="1">
    <location>
        <position position="489"/>
    </location>
    <ligand>
        <name>Mg(2+)</name>
        <dbReference type="ChEBI" id="CHEBI:18420"/>
    </ligand>
</feature>
<feature type="modified residue" description="N6-carboxylysine" evidence="1">
    <location>
        <position position="124"/>
    </location>
</feature>
<organism>
    <name type="scientific">Stutzerimonas stutzeri (strain A1501)</name>
    <name type="common">Pseudomonas stutzeri</name>
    <dbReference type="NCBI Taxonomy" id="379731"/>
    <lineage>
        <taxon>Bacteria</taxon>
        <taxon>Pseudomonadati</taxon>
        <taxon>Pseudomonadota</taxon>
        <taxon>Gammaproteobacteria</taxon>
        <taxon>Pseudomonadales</taxon>
        <taxon>Pseudomonadaceae</taxon>
        <taxon>Stutzerimonas</taxon>
    </lineage>
</organism>
<sequence length="612" mass="65418">MPDYRSKTSTHGRNMAGARALWRATGMKDEDFKKPIIAIANSFTQFVPGHVHLKDMGQLVAREIEKHGGVAKEFNTIAVDDGIAMGHDGMLYSLPSREIIADSVEYMVNAHCADAIVCISNCDKITPGMLMAALRLNIPVVFVSGGPMEAGKTKLANHGLDLVDAMVVAADDSCSDEKVAEYERSACPTCGSCSGMFTANSMNCLTEALGLSLPGNGTTLATHADREQLFLRAGRIAVELCKRYYQDGDESVLPRNVASRKAFENAMTLDIAMGGSTNTILHLLAAAQEAEVDFDLRDIDALSRKVPQLCKVAPNIQKYHMEDVHRAGGIFSILGELARGGLLHTDASTVHSPSMADAIAEWDITQTQDEAVHTFFKAGPAGIPTQVAFSQATRWPSLDLDRAEGCIRSVEHAYSQEGGLAVLYGNIALDGCVVKTAGVDESIHVFEGTAKIFESQDSAVKGILNDEVKAGDIVIIRYEGPKGGPGMQEMLYPTSYLKSKGLGKECALLTDGRFSGGTSGLSIGHASPEAAAGGAIGLVQDGDKVLIDIPNRSIQLQVSDEELAHRRIEQDKKGWKPAQPRARKVSTALKAYALLATSADKGAVRDKAMLDG</sequence>
<gene>
    <name evidence="1" type="primary">ilvD</name>
    <name type="ordered locus">PST_4012</name>
</gene>